<feature type="chain" id="PRO_0000250892" description="NADH-quinone oxidoreductase subunit I">
    <location>
        <begin position="1"/>
        <end position="162"/>
    </location>
</feature>
<feature type="domain" description="4Fe-4S ferredoxin-type 1" evidence="1">
    <location>
        <begin position="54"/>
        <end position="83"/>
    </location>
</feature>
<feature type="domain" description="4Fe-4S ferredoxin-type 2" evidence="1">
    <location>
        <begin position="93"/>
        <end position="122"/>
    </location>
</feature>
<feature type="binding site" evidence="1">
    <location>
        <position position="63"/>
    </location>
    <ligand>
        <name>[4Fe-4S] cluster</name>
        <dbReference type="ChEBI" id="CHEBI:49883"/>
        <label>1</label>
    </ligand>
</feature>
<feature type="binding site" evidence="1">
    <location>
        <position position="66"/>
    </location>
    <ligand>
        <name>[4Fe-4S] cluster</name>
        <dbReference type="ChEBI" id="CHEBI:49883"/>
        <label>1</label>
    </ligand>
</feature>
<feature type="binding site" evidence="1">
    <location>
        <position position="69"/>
    </location>
    <ligand>
        <name>[4Fe-4S] cluster</name>
        <dbReference type="ChEBI" id="CHEBI:49883"/>
        <label>1</label>
    </ligand>
</feature>
<feature type="binding site" evidence="1">
    <location>
        <position position="73"/>
    </location>
    <ligand>
        <name>[4Fe-4S] cluster</name>
        <dbReference type="ChEBI" id="CHEBI:49883"/>
        <label>2</label>
    </ligand>
</feature>
<feature type="binding site" evidence="1">
    <location>
        <position position="102"/>
    </location>
    <ligand>
        <name>[4Fe-4S] cluster</name>
        <dbReference type="ChEBI" id="CHEBI:49883"/>
        <label>2</label>
    </ligand>
</feature>
<feature type="binding site" evidence="1">
    <location>
        <position position="105"/>
    </location>
    <ligand>
        <name>[4Fe-4S] cluster</name>
        <dbReference type="ChEBI" id="CHEBI:49883"/>
        <label>2</label>
    </ligand>
</feature>
<feature type="binding site" evidence="1">
    <location>
        <position position="108"/>
    </location>
    <ligand>
        <name>[4Fe-4S] cluster</name>
        <dbReference type="ChEBI" id="CHEBI:49883"/>
        <label>2</label>
    </ligand>
</feature>
<feature type="binding site" evidence="1">
    <location>
        <position position="112"/>
    </location>
    <ligand>
        <name>[4Fe-4S] cluster</name>
        <dbReference type="ChEBI" id="CHEBI:49883"/>
        <label>1</label>
    </ligand>
</feature>
<comment type="function">
    <text evidence="1">NDH-1 shuttles electrons from NADH, via FMN and iron-sulfur (Fe-S) centers, to quinones in the respiratory chain. The immediate electron acceptor for the enzyme in this species is believed to be ubiquinone. Couples the redox reaction to proton translocation (for every two electrons transferred, four hydrogen ions are translocated across the cytoplasmic membrane), and thus conserves the redox energy in a proton gradient.</text>
</comment>
<comment type="catalytic activity">
    <reaction evidence="1">
        <text>a quinone + NADH + 5 H(+)(in) = a quinol + NAD(+) + 4 H(+)(out)</text>
        <dbReference type="Rhea" id="RHEA:57888"/>
        <dbReference type="ChEBI" id="CHEBI:15378"/>
        <dbReference type="ChEBI" id="CHEBI:24646"/>
        <dbReference type="ChEBI" id="CHEBI:57540"/>
        <dbReference type="ChEBI" id="CHEBI:57945"/>
        <dbReference type="ChEBI" id="CHEBI:132124"/>
    </reaction>
</comment>
<comment type="cofactor">
    <cofactor evidence="1">
        <name>[4Fe-4S] cluster</name>
        <dbReference type="ChEBI" id="CHEBI:49883"/>
    </cofactor>
    <text evidence="1">Binds 2 [4Fe-4S] clusters per subunit.</text>
</comment>
<comment type="subunit">
    <text evidence="1">NDH-1 is composed of 14 different subunits. Subunits NuoA, H, J, K, L, M, N constitute the membrane sector of the complex.</text>
</comment>
<comment type="subcellular location">
    <subcellularLocation>
        <location evidence="1">Cell inner membrane</location>
        <topology evidence="1">Peripheral membrane protein</topology>
    </subcellularLocation>
</comment>
<comment type="similarity">
    <text evidence="1">Belongs to the complex I 23 kDa subunit family.</text>
</comment>
<proteinExistence type="inferred from homology"/>
<name>NUOI_BURTA</name>
<dbReference type="EC" id="7.1.1.-" evidence="1"/>
<dbReference type="EMBL" id="CP000086">
    <property type="protein sequence ID" value="ABC37447.1"/>
    <property type="molecule type" value="Genomic_DNA"/>
</dbReference>
<dbReference type="RefSeq" id="WP_009892165.1">
    <property type="nucleotide sequence ID" value="NZ_CP008785.1"/>
</dbReference>
<dbReference type="SMR" id="Q2SZM7"/>
<dbReference type="GeneID" id="45120821"/>
<dbReference type="KEGG" id="bte:BTH_I1069"/>
<dbReference type="HOGENOM" id="CLU_067218_5_1_4"/>
<dbReference type="Proteomes" id="UP000001930">
    <property type="component" value="Chromosome I"/>
</dbReference>
<dbReference type="GO" id="GO:0005886">
    <property type="term" value="C:plasma membrane"/>
    <property type="evidence" value="ECO:0007669"/>
    <property type="project" value="UniProtKB-SubCell"/>
</dbReference>
<dbReference type="GO" id="GO:0051539">
    <property type="term" value="F:4 iron, 4 sulfur cluster binding"/>
    <property type="evidence" value="ECO:0007669"/>
    <property type="project" value="UniProtKB-KW"/>
</dbReference>
<dbReference type="GO" id="GO:0005506">
    <property type="term" value="F:iron ion binding"/>
    <property type="evidence" value="ECO:0007669"/>
    <property type="project" value="UniProtKB-UniRule"/>
</dbReference>
<dbReference type="GO" id="GO:0050136">
    <property type="term" value="F:NADH:ubiquinone reductase (non-electrogenic) activity"/>
    <property type="evidence" value="ECO:0007669"/>
    <property type="project" value="UniProtKB-UniRule"/>
</dbReference>
<dbReference type="GO" id="GO:0048038">
    <property type="term" value="F:quinone binding"/>
    <property type="evidence" value="ECO:0007669"/>
    <property type="project" value="UniProtKB-KW"/>
</dbReference>
<dbReference type="GO" id="GO:0009060">
    <property type="term" value="P:aerobic respiration"/>
    <property type="evidence" value="ECO:0007669"/>
    <property type="project" value="TreeGrafter"/>
</dbReference>
<dbReference type="FunFam" id="3.30.70.3270:FF:000003">
    <property type="entry name" value="NADH-quinone oxidoreductase subunit I"/>
    <property type="match status" value="1"/>
</dbReference>
<dbReference type="Gene3D" id="3.30.70.3270">
    <property type="match status" value="1"/>
</dbReference>
<dbReference type="HAMAP" id="MF_01351">
    <property type="entry name" value="NDH1_NuoI"/>
    <property type="match status" value="1"/>
</dbReference>
<dbReference type="InterPro" id="IPR017896">
    <property type="entry name" value="4Fe4S_Fe-S-bd"/>
</dbReference>
<dbReference type="InterPro" id="IPR017900">
    <property type="entry name" value="4Fe4S_Fe_S_CS"/>
</dbReference>
<dbReference type="InterPro" id="IPR010226">
    <property type="entry name" value="NADH_quinone_OxRdtase_chainI"/>
</dbReference>
<dbReference type="NCBIfam" id="TIGR01971">
    <property type="entry name" value="NuoI"/>
    <property type="match status" value="1"/>
</dbReference>
<dbReference type="NCBIfam" id="NF004538">
    <property type="entry name" value="PRK05888.1-4"/>
    <property type="match status" value="1"/>
</dbReference>
<dbReference type="NCBIfam" id="NF004539">
    <property type="entry name" value="PRK05888.1-5"/>
    <property type="match status" value="1"/>
</dbReference>
<dbReference type="PANTHER" id="PTHR10849:SF20">
    <property type="entry name" value="NADH DEHYDROGENASE [UBIQUINONE] IRON-SULFUR PROTEIN 8, MITOCHONDRIAL"/>
    <property type="match status" value="1"/>
</dbReference>
<dbReference type="PANTHER" id="PTHR10849">
    <property type="entry name" value="NADH DEHYDROGENASE UBIQUINONE IRON-SULFUR PROTEIN 8, MITOCHONDRIAL"/>
    <property type="match status" value="1"/>
</dbReference>
<dbReference type="Pfam" id="PF12838">
    <property type="entry name" value="Fer4_7"/>
    <property type="match status" value="1"/>
</dbReference>
<dbReference type="SUPFAM" id="SSF54862">
    <property type="entry name" value="4Fe-4S ferredoxins"/>
    <property type="match status" value="1"/>
</dbReference>
<dbReference type="PROSITE" id="PS00198">
    <property type="entry name" value="4FE4S_FER_1"/>
    <property type="match status" value="2"/>
</dbReference>
<dbReference type="PROSITE" id="PS51379">
    <property type="entry name" value="4FE4S_FER_2"/>
    <property type="match status" value="2"/>
</dbReference>
<accession>Q2SZM7</accession>
<sequence>MTAIQQFFKTFFLTELLKGLALTGRYTFKRKFTVQFPEEKTPISPRFRGLHALRRYENGEERCIACKLCEAVCPAMAITIESETRADNTRRTTRYDIDLTKCIFCGFCEESCPVDSIVETQILEYHGEKRGDLYFTKEMLLAVGDRYEKEIAAAKAADARYR</sequence>
<reference key="1">
    <citation type="journal article" date="2005" name="BMC Genomics">
        <title>Bacterial genome adaptation to niches: divergence of the potential virulence genes in three Burkholderia species of different survival strategies.</title>
        <authorList>
            <person name="Kim H.S."/>
            <person name="Schell M.A."/>
            <person name="Yu Y."/>
            <person name="Ulrich R.L."/>
            <person name="Sarria S.H."/>
            <person name="Nierman W.C."/>
            <person name="DeShazer D."/>
        </authorList>
    </citation>
    <scope>NUCLEOTIDE SEQUENCE [LARGE SCALE GENOMIC DNA]</scope>
    <source>
        <strain>ATCC 700388 / DSM 13276 / CCUG 48851 / CIP 106301 / E264</strain>
    </source>
</reference>
<keyword id="KW-0004">4Fe-4S</keyword>
<keyword id="KW-0997">Cell inner membrane</keyword>
<keyword id="KW-1003">Cell membrane</keyword>
<keyword id="KW-0408">Iron</keyword>
<keyword id="KW-0411">Iron-sulfur</keyword>
<keyword id="KW-0472">Membrane</keyword>
<keyword id="KW-0479">Metal-binding</keyword>
<keyword id="KW-0520">NAD</keyword>
<keyword id="KW-0874">Quinone</keyword>
<keyword id="KW-0677">Repeat</keyword>
<keyword id="KW-1278">Translocase</keyword>
<keyword id="KW-0830">Ubiquinone</keyword>
<organism>
    <name type="scientific">Burkholderia thailandensis (strain ATCC 700388 / DSM 13276 / CCUG 48851 / CIP 106301 / E264)</name>
    <dbReference type="NCBI Taxonomy" id="271848"/>
    <lineage>
        <taxon>Bacteria</taxon>
        <taxon>Pseudomonadati</taxon>
        <taxon>Pseudomonadota</taxon>
        <taxon>Betaproteobacteria</taxon>
        <taxon>Burkholderiales</taxon>
        <taxon>Burkholderiaceae</taxon>
        <taxon>Burkholderia</taxon>
        <taxon>pseudomallei group</taxon>
    </lineage>
</organism>
<evidence type="ECO:0000255" key="1">
    <source>
        <dbReference type="HAMAP-Rule" id="MF_01351"/>
    </source>
</evidence>
<gene>
    <name evidence="1" type="primary">nuoI</name>
    <name type="ordered locus">BTH_I1069</name>
</gene>
<protein>
    <recommendedName>
        <fullName evidence="1">NADH-quinone oxidoreductase subunit I</fullName>
        <ecNumber evidence="1">7.1.1.-</ecNumber>
    </recommendedName>
    <alternativeName>
        <fullName evidence="1">NADH dehydrogenase I subunit I</fullName>
    </alternativeName>
    <alternativeName>
        <fullName evidence="1">NDH-1 subunit I</fullName>
    </alternativeName>
</protein>